<dbReference type="EC" id="2.7.7.6" evidence="1"/>
<dbReference type="EMBL" id="AP009380">
    <property type="protein sequence ID" value="BAG34090.1"/>
    <property type="molecule type" value="Genomic_DNA"/>
</dbReference>
<dbReference type="RefSeq" id="WP_012458381.1">
    <property type="nucleotide sequence ID" value="NC_010729.1"/>
</dbReference>
<dbReference type="SMR" id="B2RL45"/>
<dbReference type="GeneID" id="29256745"/>
<dbReference type="KEGG" id="pgn:PGN_1571"/>
<dbReference type="eggNOG" id="COG0085">
    <property type="taxonomic scope" value="Bacteria"/>
</dbReference>
<dbReference type="HOGENOM" id="CLU_000524_4_3_10"/>
<dbReference type="OrthoDB" id="9803954at2"/>
<dbReference type="BioCyc" id="PGIN431947:G1G2V-1771-MONOMER"/>
<dbReference type="Proteomes" id="UP000008842">
    <property type="component" value="Chromosome"/>
</dbReference>
<dbReference type="GO" id="GO:0000428">
    <property type="term" value="C:DNA-directed RNA polymerase complex"/>
    <property type="evidence" value="ECO:0007669"/>
    <property type="project" value="UniProtKB-KW"/>
</dbReference>
<dbReference type="GO" id="GO:0003677">
    <property type="term" value="F:DNA binding"/>
    <property type="evidence" value="ECO:0007669"/>
    <property type="project" value="UniProtKB-UniRule"/>
</dbReference>
<dbReference type="GO" id="GO:0003899">
    <property type="term" value="F:DNA-directed RNA polymerase activity"/>
    <property type="evidence" value="ECO:0007669"/>
    <property type="project" value="UniProtKB-UniRule"/>
</dbReference>
<dbReference type="GO" id="GO:0032549">
    <property type="term" value="F:ribonucleoside binding"/>
    <property type="evidence" value="ECO:0007669"/>
    <property type="project" value="InterPro"/>
</dbReference>
<dbReference type="GO" id="GO:0006351">
    <property type="term" value="P:DNA-templated transcription"/>
    <property type="evidence" value="ECO:0007669"/>
    <property type="project" value="UniProtKB-UniRule"/>
</dbReference>
<dbReference type="CDD" id="cd00653">
    <property type="entry name" value="RNA_pol_B_RPB2"/>
    <property type="match status" value="1"/>
</dbReference>
<dbReference type="Gene3D" id="2.40.50.100">
    <property type="match status" value="1"/>
</dbReference>
<dbReference type="Gene3D" id="2.40.50.150">
    <property type="match status" value="1"/>
</dbReference>
<dbReference type="Gene3D" id="3.90.1100.10">
    <property type="match status" value="2"/>
</dbReference>
<dbReference type="Gene3D" id="2.30.150.10">
    <property type="entry name" value="DNA-directed RNA polymerase, beta subunit, external 1 domain"/>
    <property type="match status" value="1"/>
</dbReference>
<dbReference type="Gene3D" id="2.40.270.10">
    <property type="entry name" value="DNA-directed RNA polymerase, subunit 2, domain 6"/>
    <property type="match status" value="2"/>
</dbReference>
<dbReference type="Gene3D" id="3.90.1800.10">
    <property type="entry name" value="RNA polymerase alpha subunit dimerisation domain"/>
    <property type="match status" value="1"/>
</dbReference>
<dbReference type="HAMAP" id="MF_01321">
    <property type="entry name" value="RNApol_bact_RpoB"/>
    <property type="match status" value="1"/>
</dbReference>
<dbReference type="InterPro" id="IPR042107">
    <property type="entry name" value="DNA-dir_RNA_pol_bsu_ext_1_sf"/>
</dbReference>
<dbReference type="InterPro" id="IPR019462">
    <property type="entry name" value="DNA-dir_RNA_pol_bsu_external_1"/>
</dbReference>
<dbReference type="InterPro" id="IPR015712">
    <property type="entry name" value="DNA-dir_RNA_pol_su2"/>
</dbReference>
<dbReference type="InterPro" id="IPR007120">
    <property type="entry name" value="DNA-dir_RNAP_su2_dom"/>
</dbReference>
<dbReference type="InterPro" id="IPR037033">
    <property type="entry name" value="DNA-dir_RNAP_su2_hyb_sf"/>
</dbReference>
<dbReference type="InterPro" id="IPR010243">
    <property type="entry name" value="RNA_pol_bsu_bac"/>
</dbReference>
<dbReference type="InterPro" id="IPR007121">
    <property type="entry name" value="RNA_pol_bsu_CS"/>
</dbReference>
<dbReference type="InterPro" id="IPR007644">
    <property type="entry name" value="RNA_pol_bsu_protrusion"/>
</dbReference>
<dbReference type="InterPro" id="IPR007642">
    <property type="entry name" value="RNA_pol_Rpb2_2"/>
</dbReference>
<dbReference type="InterPro" id="IPR007645">
    <property type="entry name" value="RNA_pol_Rpb2_3"/>
</dbReference>
<dbReference type="InterPro" id="IPR007641">
    <property type="entry name" value="RNA_pol_Rpb2_7"/>
</dbReference>
<dbReference type="InterPro" id="IPR014724">
    <property type="entry name" value="RNA_pol_RPB2_OB-fold"/>
</dbReference>
<dbReference type="NCBIfam" id="NF001616">
    <property type="entry name" value="PRK00405.1"/>
    <property type="match status" value="1"/>
</dbReference>
<dbReference type="NCBIfam" id="TIGR02013">
    <property type="entry name" value="rpoB"/>
    <property type="match status" value="1"/>
</dbReference>
<dbReference type="PANTHER" id="PTHR20856">
    <property type="entry name" value="DNA-DIRECTED RNA POLYMERASE I SUBUNIT 2"/>
    <property type="match status" value="1"/>
</dbReference>
<dbReference type="Pfam" id="PF04563">
    <property type="entry name" value="RNA_pol_Rpb2_1"/>
    <property type="match status" value="1"/>
</dbReference>
<dbReference type="Pfam" id="PF04561">
    <property type="entry name" value="RNA_pol_Rpb2_2"/>
    <property type="match status" value="2"/>
</dbReference>
<dbReference type="Pfam" id="PF04565">
    <property type="entry name" value="RNA_pol_Rpb2_3"/>
    <property type="match status" value="1"/>
</dbReference>
<dbReference type="Pfam" id="PF10385">
    <property type="entry name" value="RNA_pol_Rpb2_45"/>
    <property type="match status" value="1"/>
</dbReference>
<dbReference type="Pfam" id="PF00562">
    <property type="entry name" value="RNA_pol_Rpb2_6"/>
    <property type="match status" value="1"/>
</dbReference>
<dbReference type="Pfam" id="PF04560">
    <property type="entry name" value="RNA_pol_Rpb2_7"/>
    <property type="match status" value="1"/>
</dbReference>
<dbReference type="SUPFAM" id="SSF64484">
    <property type="entry name" value="beta and beta-prime subunits of DNA dependent RNA-polymerase"/>
    <property type="match status" value="1"/>
</dbReference>
<dbReference type="PROSITE" id="PS01166">
    <property type="entry name" value="RNA_POL_BETA"/>
    <property type="match status" value="1"/>
</dbReference>
<name>RPOB_PORG3</name>
<accession>B2RL45</accession>
<keyword id="KW-0240">DNA-directed RNA polymerase</keyword>
<keyword id="KW-0548">Nucleotidyltransferase</keyword>
<keyword id="KW-0804">Transcription</keyword>
<keyword id="KW-0808">Transferase</keyword>
<evidence type="ECO:0000255" key="1">
    <source>
        <dbReference type="HAMAP-Rule" id="MF_01321"/>
    </source>
</evidence>
<proteinExistence type="inferred from homology"/>
<feature type="chain" id="PRO_1000141719" description="DNA-directed RNA polymerase subunit beta">
    <location>
        <begin position="1"/>
        <end position="1269"/>
    </location>
</feature>
<organism>
    <name type="scientific">Porphyromonas gingivalis (strain ATCC 33277 / DSM 20709 / CIP 103683 / JCM 12257 / NCTC 11834 / 2561)</name>
    <dbReference type="NCBI Taxonomy" id="431947"/>
    <lineage>
        <taxon>Bacteria</taxon>
        <taxon>Pseudomonadati</taxon>
        <taxon>Bacteroidota</taxon>
        <taxon>Bacteroidia</taxon>
        <taxon>Bacteroidales</taxon>
        <taxon>Porphyromonadaceae</taxon>
        <taxon>Porphyromonas</taxon>
    </lineage>
</organism>
<gene>
    <name evidence="1" type="primary">rpoB</name>
    <name type="ordered locus">PGN_1571</name>
</gene>
<protein>
    <recommendedName>
        <fullName evidence="1">DNA-directed RNA polymerase subunit beta</fullName>
        <shortName evidence="1">RNAP subunit beta</shortName>
        <ecNumber evidence="1">2.7.7.6</ecNumber>
    </recommendedName>
    <alternativeName>
        <fullName evidence="1">RNA polymerase subunit beta</fullName>
    </alternativeName>
    <alternativeName>
        <fullName evidence="1">Transcriptase subunit beta</fullName>
    </alternativeName>
</protein>
<comment type="function">
    <text evidence="1">DNA-dependent RNA polymerase catalyzes the transcription of DNA into RNA using the four ribonucleoside triphosphates as substrates.</text>
</comment>
<comment type="catalytic activity">
    <reaction evidence="1">
        <text>RNA(n) + a ribonucleoside 5'-triphosphate = RNA(n+1) + diphosphate</text>
        <dbReference type="Rhea" id="RHEA:21248"/>
        <dbReference type="Rhea" id="RHEA-COMP:14527"/>
        <dbReference type="Rhea" id="RHEA-COMP:17342"/>
        <dbReference type="ChEBI" id="CHEBI:33019"/>
        <dbReference type="ChEBI" id="CHEBI:61557"/>
        <dbReference type="ChEBI" id="CHEBI:140395"/>
        <dbReference type="EC" id="2.7.7.6"/>
    </reaction>
</comment>
<comment type="subunit">
    <text evidence="1">The RNAP catalytic core consists of 2 alpha, 1 beta, 1 beta' and 1 omega subunit. When a sigma factor is associated with the core the holoenzyme is formed, which can initiate transcription.</text>
</comment>
<comment type="similarity">
    <text evidence="1">Belongs to the RNA polymerase beta chain family.</text>
</comment>
<reference key="1">
    <citation type="journal article" date="2008" name="DNA Res.">
        <title>Determination of the genome sequence of Porphyromonas gingivalis strain ATCC 33277 and genomic comparison with strain W83 revealed extensive genome rearrangements in P. gingivalis.</title>
        <authorList>
            <person name="Naito M."/>
            <person name="Hirakawa H."/>
            <person name="Yamashita A."/>
            <person name="Ohara N."/>
            <person name="Shoji M."/>
            <person name="Yukitake H."/>
            <person name="Nakayama K."/>
            <person name="Toh H."/>
            <person name="Yoshimura F."/>
            <person name="Kuhara S."/>
            <person name="Hattori M."/>
            <person name="Hayashi T."/>
            <person name="Nakayama K."/>
        </authorList>
    </citation>
    <scope>NUCLEOTIDE SEQUENCE [LARGE SCALE GENOMIC DNA]</scope>
    <source>
        <strain>ATCC 33277 / DSM 20709 / CIP 103683 / JCM 12257 / NCTC 11834 / 2561</strain>
    </source>
</reference>
<sequence>MTPTTNNKRINFASIKNPLFYPDFLEVQLKSFHDFLQLDTPPERRKKEGLYKVFAENFPITDTRNNFVLEFLDYYIDPPKYSIEECLSRGLTYSVPLKAKLKLYCTDPDHEDFATVIQDVFLGPIPYMTSSGTFVINGAERVIVSQLHRSPGVFFGQSLHTNGTKLYSARIIPFKGSWIEFATDINNVMYAYIDRKKKLPVTTLLRAIGFEADKDILDIFNLAEEVKVTKANLKKCIGRKLAARVINTYIDDLSDEDTGEVVSMERITVVVDREVELTEDNIEAILNSNTQTILLHRNDSNTSDYSIIFNTLQKDPCNSEKEALYYVYRQLRNAEPADDASAREVITNLFFSDKRYDLGDVGRYRINKKLNLNIDPDIKVLTNEDIIEIIKYLIELVNSKASVDDIDHLSNRRVRTVGEQLYNQFGIGLARMARTVRDRMNVRDNEVFTPIDLVNAKTISSVVNSFFGTNALSQFMDQTNPLAEITHKRRLSALGPGGLSRERAGFEVRDVHYTHYGRLCPIETPEGPNIGLISSLCVYAKISDLGFITTPYREVKNGKVDFSDNGLKYYTAEEEEEKTVAQGNAPLDENGRFVRERVKARYESDFPLVTPDEVDLMDVSPTQIASIAAALIPFLEHDDANRALMGSNMMRQAVPLLRPESPIVGTGIEGKLVKDSRTQIVAERGGEVVFVDASCIKIRYDRTADEEFVSFDDAIVTYYLPKYRKTNQSTTIDLHPICSKGDRVEAGQILTEGYSTQGGELALGRNVQVAYMPWKGYNYEDAIVLNERMVREDFFTSVHVDEYILEVRETKRGLEELTSDIPNVSEDATRDLDENGIVRIGAHIEPGDILIGKITPKGESDPTPEEKLLRAIFGDKAGDVKDASLKATPSLRGVVIDTKLFSKAAKKKSRTSTKETVSKLDETYAKRQQQLHERLIEKLTELTKGKTCCGVKDYLNVELIKAGSKLTKKDLEALDFNVIQLSDWTNDAHTNELIKAVAVNYLKHSKEIEAELRRRKLDETIGDELPAGIVQMAKVYIAKKRKIQVGDKMAGRHGNKGIVSKIVRQEDMPFLADGTPVDICLNPLGVPSRMNLGQIFEAVLAWAGRKMNVKFATPIFDGASLNDMNEWTDKAGLPRDGKTYLYDGGTGERFDQPATVGVTYFLKLGHMVDDKMHARSIGPYSLITQQPLGGKAQFGGQRFGEMEVWALEAFGASHILQEILTVKSDDVVGRSKAYEAIVKGDPMPTPGIPESLNVLLHELKGLGLSFSLD</sequence>